<proteinExistence type="inferred from homology"/>
<reference key="1">
    <citation type="journal article" date="2005" name="Genome Res.">
        <title>Comparative and functional genomic analyses of the pathogenicity of phytopathogen Xanthomonas campestris pv. campestris.</title>
        <authorList>
            <person name="Qian W."/>
            <person name="Jia Y."/>
            <person name="Ren S.-X."/>
            <person name="He Y.-Q."/>
            <person name="Feng J.-X."/>
            <person name="Lu L.-F."/>
            <person name="Sun Q."/>
            <person name="Ying G."/>
            <person name="Tang D.-J."/>
            <person name="Tang H."/>
            <person name="Wu W."/>
            <person name="Hao P."/>
            <person name="Wang L."/>
            <person name="Jiang B.-L."/>
            <person name="Zeng S."/>
            <person name="Gu W.-Y."/>
            <person name="Lu G."/>
            <person name="Rong L."/>
            <person name="Tian Y."/>
            <person name="Yao Z."/>
            <person name="Fu G."/>
            <person name="Chen B."/>
            <person name="Fang R."/>
            <person name="Qiang B."/>
            <person name="Chen Z."/>
            <person name="Zhao G.-P."/>
            <person name="Tang J.-L."/>
            <person name="He C."/>
        </authorList>
    </citation>
    <scope>NUCLEOTIDE SEQUENCE [LARGE SCALE GENOMIC DNA]</scope>
    <source>
        <strain>8004</strain>
    </source>
</reference>
<comment type="function">
    <text evidence="1">Responsible for the release of ribosomes from messenger RNA at the termination of protein biosynthesis. May increase the efficiency of translation by recycling ribosomes from one round of translation to another.</text>
</comment>
<comment type="subcellular location">
    <subcellularLocation>
        <location evidence="1">Cytoplasm</location>
    </subcellularLocation>
</comment>
<comment type="similarity">
    <text evidence="1">Belongs to the RRF family.</text>
</comment>
<accession>Q4USQ7</accession>
<name>RRF_XANC8</name>
<protein>
    <recommendedName>
        <fullName evidence="1">Ribosome-recycling factor</fullName>
        <shortName evidence="1">RRF</shortName>
    </recommendedName>
    <alternativeName>
        <fullName evidence="1">Ribosome-releasing factor</fullName>
    </alternativeName>
</protein>
<keyword id="KW-0963">Cytoplasm</keyword>
<keyword id="KW-0648">Protein biosynthesis</keyword>
<evidence type="ECO:0000255" key="1">
    <source>
        <dbReference type="HAMAP-Rule" id="MF_00040"/>
    </source>
</evidence>
<gene>
    <name evidence="1" type="primary">frr</name>
    <name type="ordered locus">XC_2868</name>
</gene>
<sequence>MLNQIKQDAQTRMTKSIDALRHSLTTVRTGRASPALLDNIKVKAYGTDTPLNQVASISVSEGRSLVISLFDKGMIKDVEKAIYASDLGLTPTVVGTVIRLNLPPLTEERRKELSKSVHGEGEDAKVAIRNIRRDANQQVKDLLKDKQVTEDEARGAEDDIQKLTDKAIKDVDEVVKGKEQELMTV</sequence>
<dbReference type="EMBL" id="CP000050">
    <property type="protein sequence ID" value="AAY49916.1"/>
    <property type="molecule type" value="Genomic_DNA"/>
</dbReference>
<dbReference type="RefSeq" id="WP_011036562.1">
    <property type="nucleotide sequence ID" value="NZ_CP155948.1"/>
</dbReference>
<dbReference type="SMR" id="Q4USQ7"/>
<dbReference type="GeneID" id="58014032"/>
<dbReference type="KEGG" id="xcb:XC_2868"/>
<dbReference type="HOGENOM" id="CLU_073981_2_0_6"/>
<dbReference type="Proteomes" id="UP000000420">
    <property type="component" value="Chromosome"/>
</dbReference>
<dbReference type="GO" id="GO:0005829">
    <property type="term" value="C:cytosol"/>
    <property type="evidence" value="ECO:0007669"/>
    <property type="project" value="GOC"/>
</dbReference>
<dbReference type="GO" id="GO:0043023">
    <property type="term" value="F:ribosomal large subunit binding"/>
    <property type="evidence" value="ECO:0007669"/>
    <property type="project" value="TreeGrafter"/>
</dbReference>
<dbReference type="GO" id="GO:0002184">
    <property type="term" value="P:cytoplasmic translational termination"/>
    <property type="evidence" value="ECO:0007669"/>
    <property type="project" value="TreeGrafter"/>
</dbReference>
<dbReference type="CDD" id="cd00520">
    <property type="entry name" value="RRF"/>
    <property type="match status" value="1"/>
</dbReference>
<dbReference type="FunFam" id="1.10.132.20:FF:000001">
    <property type="entry name" value="Ribosome-recycling factor"/>
    <property type="match status" value="1"/>
</dbReference>
<dbReference type="FunFam" id="3.30.1360.40:FF:000001">
    <property type="entry name" value="Ribosome-recycling factor"/>
    <property type="match status" value="1"/>
</dbReference>
<dbReference type="Gene3D" id="3.30.1360.40">
    <property type="match status" value="1"/>
</dbReference>
<dbReference type="Gene3D" id="1.10.132.20">
    <property type="entry name" value="Ribosome-recycling factor"/>
    <property type="match status" value="1"/>
</dbReference>
<dbReference type="HAMAP" id="MF_00040">
    <property type="entry name" value="RRF"/>
    <property type="match status" value="1"/>
</dbReference>
<dbReference type="InterPro" id="IPR002661">
    <property type="entry name" value="Ribosome_recyc_fac"/>
</dbReference>
<dbReference type="InterPro" id="IPR023584">
    <property type="entry name" value="Ribosome_recyc_fac_dom"/>
</dbReference>
<dbReference type="InterPro" id="IPR036191">
    <property type="entry name" value="RRF_sf"/>
</dbReference>
<dbReference type="NCBIfam" id="TIGR00496">
    <property type="entry name" value="frr"/>
    <property type="match status" value="1"/>
</dbReference>
<dbReference type="PANTHER" id="PTHR20982:SF3">
    <property type="entry name" value="MITOCHONDRIAL RIBOSOME RECYCLING FACTOR PSEUDO 1"/>
    <property type="match status" value="1"/>
</dbReference>
<dbReference type="PANTHER" id="PTHR20982">
    <property type="entry name" value="RIBOSOME RECYCLING FACTOR"/>
    <property type="match status" value="1"/>
</dbReference>
<dbReference type="Pfam" id="PF01765">
    <property type="entry name" value="RRF"/>
    <property type="match status" value="1"/>
</dbReference>
<dbReference type="SUPFAM" id="SSF55194">
    <property type="entry name" value="Ribosome recycling factor, RRF"/>
    <property type="match status" value="1"/>
</dbReference>
<feature type="chain" id="PRO_1000003311" description="Ribosome-recycling factor">
    <location>
        <begin position="1"/>
        <end position="185"/>
    </location>
</feature>
<organism>
    <name type="scientific">Xanthomonas campestris pv. campestris (strain 8004)</name>
    <dbReference type="NCBI Taxonomy" id="314565"/>
    <lineage>
        <taxon>Bacteria</taxon>
        <taxon>Pseudomonadati</taxon>
        <taxon>Pseudomonadota</taxon>
        <taxon>Gammaproteobacteria</taxon>
        <taxon>Lysobacterales</taxon>
        <taxon>Lysobacteraceae</taxon>
        <taxon>Xanthomonas</taxon>
    </lineage>
</organism>